<dbReference type="EMBL" id="AL049500">
    <property type="protein sequence ID" value="CAB39944.1"/>
    <property type="molecule type" value="Genomic_DNA"/>
</dbReference>
<dbReference type="EMBL" id="AL161532">
    <property type="protein sequence ID" value="CAB78216.1"/>
    <property type="molecule type" value="Genomic_DNA"/>
</dbReference>
<dbReference type="EMBL" id="CP002687">
    <property type="protein sequence ID" value="AEE83042.1"/>
    <property type="molecule type" value="Genomic_DNA"/>
</dbReference>
<dbReference type="PIR" id="T04220">
    <property type="entry name" value="T04220"/>
</dbReference>
<dbReference type="RefSeq" id="NP_192910.1">
    <property type="nucleotide sequence ID" value="NM_117242.1"/>
</dbReference>
<dbReference type="SMR" id="Q9T0E0"/>
<dbReference type="FunCoup" id="Q9T0E0">
    <property type="interactions" value="108"/>
</dbReference>
<dbReference type="STRING" id="3702.Q9T0E0"/>
<dbReference type="GlyGen" id="Q9T0E0">
    <property type="glycosylation" value="1 site"/>
</dbReference>
<dbReference type="PaxDb" id="3702-AT4G11730.1"/>
<dbReference type="EnsemblPlants" id="AT4G11730.1">
    <property type="protein sequence ID" value="AT4G11730.1"/>
    <property type="gene ID" value="AT4G11730"/>
</dbReference>
<dbReference type="GeneID" id="826778"/>
<dbReference type="Gramene" id="AT4G11730.1">
    <property type="protein sequence ID" value="AT4G11730.1"/>
    <property type="gene ID" value="AT4G11730"/>
</dbReference>
<dbReference type="KEGG" id="ath:AT4G11730"/>
<dbReference type="Araport" id="AT4G11730"/>
<dbReference type="TAIR" id="AT4G11730"/>
<dbReference type="eggNOG" id="KOG0205">
    <property type="taxonomic scope" value="Eukaryota"/>
</dbReference>
<dbReference type="HOGENOM" id="CLU_002360_6_4_1"/>
<dbReference type="InParanoid" id="Q9T0E0"/>
<dbReference type="PhylomeDB" id="Q9T0E0"/>
<dbReference type="BioCyc" id="ARA:AT4G11730-MONOMER"/>
<dbReference type="PRO" id="PR:Q9T0E0"/>
<dbReference type="Proteomes" id="UP000006548">
    <property type="component" value="Chromosome 4"/>
</dbReference>
<dbReference type="ExpressionAtlas" id="Q9T0E0">
    <property type="expression patterns" value="baseline and differential"/>
</dbReference>
<dbReference type="GO" id="GO:0005886">
    <property type="term" value="C:plasma membrane"/>
    <property type="evidence" value="ECO:0007005"/>
    <property type="project" value="TAIR"/>
</dbReference>
<dbReference type="GO" id="GO:0005524">
    <property type="term" value="F:ATP binding"/>
    <property type="evidence" value="ECO:0007669"/>
    <property type="project" value="UniProtKB-KW"/>
</dbReference>
<dbReference type="GO" id="GO:0016887">
    <property type="term" value="F:ATP hydrolysis activity"/>
    <property type="evidence" value="ECO:0007669"/>
    <property type="project" value="InterPro"/>
</dbReference>
<dbReference type="GO" id="GO:0046872">
    <property type="term" value="F:metal ion binding"/>
    <property type="evidence" value="ECO:0007669"/>
    <property type="project" value="UniProtKB-KW"/>
</dbReference>
<dbReference type="FunFam" id="1.20.1110.10:FF:000168">
    <property type="match status" value="1"/>
</dbReference>
<dbReference type="FunFam" id="2.70.150.10:FF:000004">
    <property type="entry name" value="Plasma membrane ATPase"/>
    <property type="match status" value="1"/>
</dbReference>
<dbReference type="FunFam" id="3.40.50.1000:FF:000211">
    <property type="entry name" value="Plasma membrane ATPase"/>
    <property type="match status" value="1"/>
</dbReference>
<dbReference type="Gene3D" id="3.40.1110.10">
    <property type="entry name" value="Calcium-transporting ATPase, cytoplasmic domain N"/>
    <property type="match status" value="1"/>
</dbReference>
<dbReference type="Gene3D" id="2.70.150.10">
    <property type="entry name" value="Calcium-transporting ATPase, cytoplasmic transduction domain A"/>
    <property type="match status" value="1"/>
</dbReference>
<dbReference type="Gene3D" id="1.20.1110.10">
    <property type="entry name" value="Calcium-transporting ATPase, transmembrane domain"/>
    <property type="match status" value="2"/>
</dbReference>
<dbReference type="Gene3D" id="3.40.50.1000">
    <property type="entry name" value="HAD superfamily/HAD-like"/>
    <property type="match status" value="2"/>
</dbReference>
<dbReference type="InterPro" id="IPR004014">
    <property type="entry name" value="ATPase_P-typ_cation-transptr_N"/>
</dbReference>
<dbReference type="InterPro" id="IPR023299">
    <property type="entry name" value="ATPase_P-typ_cyto_dom_N"/>
</dbReference>
<dbReference type="InterPro" id="IPR018303">
    <property type="entry name" value="ATPase_P-typ_P_site"/>
</dbReference>
<dbReference type="InterPro" id="IPR023298">
    <property type="entry name" value="ATPase_P-typ_TM_dom_sf"/>
</dbReference>
<dbReference type="InterPro" id="IPR008250">
    <property type="entry name" value="ATPase_P-typ_transduc_dom_A_sf"/>
</dbReference>
<dbReference type="InterPro" id="IPR036412">
    <property type="entry name" value="HAD-like_sf"/>
</dbReference>
<dbReference type="InterPro" id="IPR023214">
    <property type="entry name" value="HAD_sf"/>
</dbReference>
<dbReference type="InterPro" id="IPR001757">
    <property type="entry name" value="P_typ_ATPase"/>
</dbReference>
<dbReference type="NCBIfam" id="TIGR01494">
    <property type="entry name" value="ATPase_P-type"/>
    <property type="match status" value="1"/>
</dbReference>
<dbReference type="PANTHER" id="PTHR42861">
    <property type="entry name" value="CALCIUM-TRANSPORTING ATPASE"/>
    <property type="match status" value="1"/>
</dbReference>
<dbReference type="Pfam" id="PF00690">
    <property type="entry name" value="Cation_ATPase_N"/>
    <property type="match status" value="1"/>
</dbReference>
<dbReference type="Pfam" id="PF00122">
    <property type="entry name" value="E1-E2_ATPase"/>
    <property type="match status" value="1"/>
</dbReference>
<dbReference type="PRINTS" id="PR00119">
    <property type="entry name" value="CATATPASE"/>
</dbReference>
<dbReference type="PRINTS" id="PR00121">
    <property type="entry name" value="NAKATPASE"/>
</dbReference>
<dbReference type="SMART" id="SM00831">
    <property type="entry name" value="Cation_ATPase_N"/>
    <property type="match status" value="1"/>
</dbReference>
<dbReference type="SUPFAM" id="SSF81653">
    <property type="entry name" value="Calcium ATPase, transduction domain A"/>
    <property type="match status" value="1"/>
</dbReference>
<dbReference type="SUPFAM" id="SSF81665">
    <property type="entry name" value="Calcium ATPase, transmembrane domain M"/>
    <property type="match status" value="1"/>
</dbReference>
<dbReference type="SUPFAM" id="SSF56784">
    <property type="entry name" value="HAD-like"/>
    <property type="match status" value="1"/>
</dbReference>
<dbReference type="PROSITE" id="PS00154">
    <property type="entry name" value="ATPASE_E1_E2"/>
    <property type="match status" value="1"/>
</dbReference>
<evidence type="ECO:0000250" key="1">
    <source>
        <dbReference type="UniProtKB" id="P19456"/>
    </source>
</evidence>
<evidence type="ECO:0000255" key="2"/>
<evidence type="ECO:0000305" key="3"/>
<name>PMAX_ARATH</name>
<keyword id="KW-0067">ATP-binding</keyword>
<keyword id="KW-0460">Magnesium</keyword>
<keyword id="KW-0472">Membrane</keyword>
<keyword id="KW-0479">Metal-binding</keyword>
<keyword id="KW-0547">Nucleotide-binding</keyword>
<keyword id="KW-0597">Phosphoprotein</keyword>
<keyword id="KW-1185">Reference proteome</keyword>
<keyword id="KW-0812">Transmembrane</keyword>
<keyword id="KW-1133">Transmembrane helix</keyword>
<feature type="chain" id="PRO_0000046285" description="Putative ATPase, plasma membrane-like">
    <location>
        <begin position="1"/>
        <end position="813"/>
    </location>
</feature>
<feature type="topological domain" description="Cytoplasmic" evidence="2">
    <location>
        <begin position="1"/>
        <end position="66"/>
    </location>
</feature>
<feature type="transmembrane region" description="Helical; Name=1" evidence="2">
    <location>
        <begin position="67"/>
        <end position="86"/>
    </location>
</feature>
<feature type="topological domain" description="Extracellular" evidence="2">
    <location>
        <begin position="87"/>
        <end position="94"/>
    </location>
</feature>
<feature type="transmembrane region" description="Helical; Name=2" evidence="2">
    <location>
        <begin position="95"/>
        <end position="115"/>
    </location>
</feature>
<feature type="topological domain" description="Cytoplasmic" evidence="2">
    <location>
        <begin position="116"/>
        <end position="245"/>
    </location>
</feature>
<feature type="transmembrane region" description="Helical; Name=3" evidence="2">
    <location>
        <begin position="246"/>
        <end position="266"/>
    </location>
</feature>
<feature type="topological domain" description="Extracellular" evidence="2">
    <location>
        <begin position="267"/>
        <end position="275"/>
    </location>
</feature>
<feature type="transmembrane region" description="Helical; Name=4" evidence="2">
    <location>
        <begin position="276"/>
        <end position="293"/>
    </location>
</feature>
<feature type="topological domain" description="Cytoplasmic" evidence="2">
    <location>
        <begin position="294"/>
        <end position="555"/>
    </location>
</feature>
<feature type="transmembrane region" description="Helical; Name=5" evidence="2">
    <location>
        <begin position="556"/>
        <end position="577"/>
    </location>
</feature>
<feature type="topological domain" description="Extracellular" evidence="2">
    <location>
        <begin position="578"/>
        <end position="582"/>
    </location>
</feature>
<feature type="transmembrane region" description="Helical; Name=6" evidence="2">
    <location>
        <begin position="583"/>
        <end position="605"/>
    </location>
</feature>
<feature type="topological domain" description="Cytoplasmic" evidence="2">
    <location>
        <begin position="606"/>
        <end position="622"/>
    </location>
</feature>
<feature type="transmembrane region" description="Helical; Name=7" evidence="2">
    <location>
        <begin position="623"/>
        <end position="643"/>
    </location>
</feature>
<feature type="topological domain" description="Extracellular" evidence="2">
    <location>
        <begin position="644"/>
        <end position="664"/>
    </location>
</feature>
<feature type="transmembrane region" description="Helical; Name=8" evidence="2">
    <location>
        <begin position="665"/>
        <end position="685"/>
    </location>
</feature>
<feature type="topological domain" description="Cytoplasmic" evidence="2">
    <location>
        <begin position="686"/>
        <end position="697"/>
    </location>
</feature>
<feature type="transmembrane region" description="Helical; Name=9" evidence="2">
    <location>
        <begin position="698"/>
        <end position="718"/>
    </location>
</feature>
<feature type="topological domain" description="Extracellular" evidence="2">
    <location>
        <begin position="719"/>
        <end position="726"/>
    </location>
</feature>
<feature type="transmembrane region" description="Helical; Name=10" evidence="2">
    <location>
        <begin position="727"/>
        <end position="747"/>
    </location>
</feature>
<feature type="topological domain" description="Cytoplasmic" evidence="2">
    <location>
        <begin position="748"/>
        <end position="813"/>
    </location>
</feature>
<feature type="active site" description="4-aspartylphosphate intermediate" evidence="2">
    <location>
        <position position="331"/>
    </location>
</feature>
<feature type="binding site" evidence="2">
    <location>
        <position position="500"/>
    </location>
    <ligand>
        <name>Mg(2+)</name>
        <dbReference type="ChEBI" id="CHEBI:18420"/>
    </ligand>
</feature>
<feature type="binding site" evidence="2">
    <location>
        <position position="504"/>
    </location>
    <ligand>
        <name>Mg(2+)</name>
        <dbReference type="ChEBI" id="CHEBI:18420"/>
    </ligand>
</feature>
<feature type="modified residue" description="Phosphoserine" evidence="1">
    <location>
        <position position="776"/>
    </location>
</feature>
<proteinExistence type="inferred from homology"/>
<protein>
    <recommendedName>
        <fullName>Putative ATPase, plasma membrane-like</fullName>
    </recommendedName>
</protein>
<reference key="1">
    <citation type="journal article" date="1999" name="Nature">
        <title>Sequence and analysis of chromosome 4 of the plant Arabidopsis thaliana.</title>
        <authorList>
            <person name="Mayer K.F.X."/>
            <person name="Schueller C."/>
            <person name="Wambutt R."/>
            <person name="Murphy G."/>
            <person name="Volckaert G."/>
            <person name="Pohl T."/>
            <person name="Duesterhoeft A."/>
            <person name="Stiekema W."/>
            <person name="Entian K.-D."/>
            <person name="Terryn N."/>
            <person name="Harris B."/>
            <person name="Ansorge W."/>
            <person name="Brandt P."/>
            <person name="Grivell L.A."/>
            <person name="Rieger M."/>
            <person name="Weichselgartner M."/>
            <person name="de Simone V."/>
            <person name="Obermaier B."/>
            <person name="Mache R."/>
            <person name="Mueller M."/>
            <person name="Kreis M."/>
            <person name="Delseny M."/>
            <person name="Puigdomenech P."/>
            <person name="Watson M."/>
            <person name="Schmidtheini T."/>
            <person name="Reichert B."/>
            <person name="Portetelle D."/>
            <person name="Perez-Alonso M."/>
            <person name="Boutry M."/>
            <person name="Bancroft I."/>
            <person name="Vos P."/>
            <person name="Hoheisel J."/>
            <person name="Zimmermann W."/>
            <person name="Wedler H."/>
            <person name="Ridley P."/>
            <person name="Langham S.-A."/>
            <person name="McCullagh B."/>
            <person name="Bilham L."/>
            <person name="Robben J."/>
            <person name="van der Schueren J."/>
            <person name="Grymonprez B."/>
            <person name="Chuang Y.-J."/>
            <person name="Vandenbussche F."/>
            <person name="Braeken M."/>
            <person name="Weltjens I."/>
            <person name="Voet M."/>
            <person name="Bastiaens I."/>
            <person name="Aert R."/>
            <person name="Defoor E."/>
            <person name="Weitzenegger T."/>
            <person name="Bothe G."/>
            <person name="Ramsperger U."/>
            <person name="Hilbert H."/>
            <person name="Braun M."/>
            <person name="Holzer E."/>
            <person name="Brandt A."/>
            <person name="Peters S."/>
            <person name="van Staveren M."/>
            <person name="Dirkse W."/>
            <person name="Mooijman P."/>
            <person name="Klein Lankhorst R."/>
            <person name="Rose M."/>
            <person name="Hauf J."/>
            <person name="Koetter P."/>
            <person name="Berneiser S."/>
            <person name="Hempel S."/>
            <person name="Feldpausch M."/>
            <person name="Lamberth S."/>
            <person name="Van den Daele H."/>
            <person name="De Keyser A."/>
            <person name="Buysshaert C."/>
            <person name="Gielen J."/>
            <person name="Villarroel R."/>
            <person name="De Clercq R."/>
            <person name="van Montagu M."/>
            <person name="Rogers J."/>
            <person name="Cronin A."/>
            <person name="Quail M.A."/>
            <person name="Bray-Allen S."/>
            <person name="Clark L."/>
            <person name="Doggett J."/>
            <person name="Hall S."/>
            <person name="Kay M."/>
            <person name="Lennard N."/>
            <person name="McLay K."/>
            <person name="Mayes R."/>
            <person name="Pettett A."/>
            <person name="Rajandream M.A."/>
            <person name="Lyne M."/>
            <person name="Benes V."/>
            <person name="Rechmann S."/>
            <person name="Borkova D."/>
            <person name="Bloecker H."/>
            <person name="Scharfe M."/>
            <person name="Grimm M."/>
            <person name="Loehnert T.-H."/>
            <person name="Dose S."/>
            <person name="de Haan M."/>
            <person name="Maarse A.C."/>
            <person name="Schaefer M."/>
            <person name="Mueller-Auer S."/>
            <person name="Gabel C."/>
            <person name="Fuchs M."/>
            <person name="Fartmann B."/>
            <person name="Granderath K."/>
            <person name="Dauner D."/>
            <person name="Herzl A."/>
            <person name="Neumann S."/>
            <person name="Argiriou A."/>
            <person name="Vitale D."/>
            <person name="Liguori R."/>
            <person name="Piravandi E."/>
            <person name="Massenet O."/>
            <person name="Quigley F."/>
            <person name="Clabauld G."/>
            <person name="Muendlein A."/>
            <person name="Felber R."/>
            <person name="Schnabl S."/>
            <person name="Hiller R."/>
            <person name="Schmidt W."/>
            <person name="Lecharny A."/>
            <person name="Aubourg S."/>
            <person name="Chefdor F."/>
            <person name="Cooke R."/>
            <person name="Berger C."/>
            <person name="Monfort A."/>
            <person name="Casacuberta E."/>
            <person name="Gibbons T."/>
            <person name="Weber N."/>
            <person name="Vandenbol M."/>
            <person name="Bargues M."/>
            <person name="Terol J."/>
            <person name="Torres A."/>
            <person name="Perez-Perez A."/>
            <person name="Purnelle B."/>
            <person name="Bent E."/>
            <person name="Johnson S."/>
            <person name="Tacon D."/>
            <person name="Jesse T."/>
            <person name="Heijnen L."/>
            <person name="Schwarz S."/>
            <person name="Scholler P."/>
            <person name="Heber S."/>
            <person name="Francs P."/>
            <person name="Bielke C."/>
            <person name="Frishman D."/>
            <person name="Haase D."/>
            <person name="Lemcke K."/>
            <person name="Mewes H.-W."/>
            <person name="Stocker S."/>
            <person name="Zaccaria P."/>
            <person name="Bevan M."/>
            <person name="Wilson R.K."/>
            <person name="de la Bastide M."/>
            <person name="Habermann K."/>
            <person name="Parnell L."/>
            <person name="Dedhia N."/>
            <person name="Gnoj L."/>
            <person name="Schutz K."/>
            <person name="Huang E."/>
            <person name="Spiegel L."/>
            <person name="Sekhon M."/>
            <person name="Murray J."/>
            <person name="Sheet P."/>
            <person name="Cordes M."/>
            <person name="Abu-Threideh J."/>
            <person name="Stoneking T."/>
            <person name="Kalicki J."/>
            <person name="Graves T."/>
            <person name="Harmon G."/>
            <person name="Edwards J."/>
            <person name="Latreille P."/>
            <person name="Courtney L."/>
            <person name="Cloud J."/>
            <person name="Abbott A."/>
            <person name="Scott K."/>
            <person name="Johnson D."/>
            <person name="Minx P."/>
            <person name="Bentley D."/>
            <person name="Fulton B."/>
            <person name="Miller N."/>
            <person name="Greco T."/>
            <person name="Kemp K."/>
            <person name="Kramer J."/>
            <person name="Fulton L."/>
            <person name="Mardis E."/>
            <person name="Dante M."/>
            <person name="Pepin K."/>
            <person name="Hillier L.W."/>
            <person name="Nelson J."/>
            <person name="Spieth J."/>
            <person name="Ryan E."/>
            <person name="Andrews S."/>
            <person name="Geisel C."/>
            <person name="Layman D."/>
            <person name="Du H."/>
            <person name="Ali J."/>
            <person name="Berghoff A."/>
            <person name="Jones K."/>
            <person name="Drone K."/>
            <person name="Cotton M."/>
            <person name="Joshu C."/>
            <person name="Antonoiu B."/>
            <person name="Zidanic M."/>
            <person name="Strong C."/>
            <person name="Sun H."/>
            <person name="Lamar B."/>
            <person name="Yordan C."/>
            <person name="Ma P."/>
            <person name="Zhong J."/>
            <person name="Preston R."/>
            <person name="Vil D."/>
            <person name="Shekher M."/>
            <person name="Matero A."/>
            <person name="Shah R."/>
            <person name="Swaby I.K."/>
            <person name="O'Shaughnessy A."/>
            <person name="Rodriguez M."/>
            <person name="Hoffman J."/>
            <person name="Till S."/>
            <person name="Granat S."/>
            <person name="Shohdy N."/>
            <person name="Hasegawa A."/>
            <person name="Hameed A."/>
            <person name="Lodhi M."/>
            <person name="Johnson A."/>
            <person name="Chen E."/>
            <person name="Marra M.A."/>
            <person name="Martienssen R."/>
            <person name="McCombie W.R."/>
        </authorList>
    </citation>
    <scope>NUCLEOTIDE SEQUENCE [LARGE SCALE GENOMIC DNA]</scope>
    <source>
        <strain>cv. Columbia</strain>
    </source>
</reference>
<reference key="2">
    <citation type="journal article" date="2017" name="Plant J.">
        <title>Araport11: a complete reannotation of the Arabidopsis thaliana reference genome.</title>
        <authorList>
            <person name="Cheng C.Y."/>
            <person name="Krishnakumar V."/>
            <person name="Chan A.P."/>
            <person name="Thibaud-Nissen F."/>
            <person name="Schobel S."/>
            <person name="Town C.D."/>
        </authorList>
    </citation>
    <scope>GENOME REANNOTATION</scope>
    <source>
        <strain>cv. Columbia</strain>
    </source>
</reference>
<gene>
    <name type="ordered locus">At4g11730</name>
    <name type="ORF">T5C23.160</name>
</gene>
<sequence length="813" mass="90439">MATGDSLEDIKIEIDDDLEKIPIEEVFKKLRCSREGLSGAEGKERLKIFGPNKLENKKKEHITLRFFALMFKPLSWVIQAAAIMAMLFANGDGRQLFLGIVCLLIVNTIICYLKEDDAANVVAMARAGLSPKTKVLRDGKWSEQEASILVPGDIVSIKPGDIIPCDARLLEGDTLKVDQSALTGEFGPITKGPGEEVFSGTTCKQGEMEAVVIATGVHTFSGTTAHLVDNRTNKVGHFRKVVTEIENLCVISIAIGISIEVIVMYWIQRRNFSDVINNLLVLVIGGIPLAMPTVLYVIMVTGSLRLYRTGTITQRITAIEDMAAIDVLCSDKTGTLTLNKLSVDKNLIKVYSKDVEKEQVLLLAARASRIENRDGIDAAMVGSLADPKEARAGIREVHFNLVDKRTALTYIDGNGDWHRVSKGTPEQILDLCNARDDLRKSVHSAIRNYAERGLKSFAISWFRNTNCNTVFFFPYQLCSEHKYHIVNKLQERHICGLIGDGVDDVPSLKKADVGIAVANATEAARAASDIVLTEPGLSVIIDAVLASRAILQQMKHYTIYAVSITIRVVFGFMFIALIWKFDFSPFMVLAIALLNEETTKAITMDNVTNPSPTPDSLKLKEIFATGVVYGSYMALITVVFFWAAYRTDIFPRTFHVRDLRGNEAEMMCALYLQVSIMSQALFFVIQSRSWFFVERPGELLFLSFVTVQTIATTLAVYASWETARIEGIGWSWAGVIWLYNIIFFFPLDIMKFGIRYILTGKAQSLFDNMVHLVLNSYAKLSNGIYNHTQADHTYSLLEVSTPPSQDLRGVGWV</sequence>
<accession>Q9T0E0</accession>
<comment type="subcellular location">
    <subcellularLocation>
        <location evidence="3">Membrane</location>
        <topology evidence="3">Multi-pass membrane protein</topology>
    </subcellularLocation>
</comment>
<comment type="similarity">
    <text evidence="3">Belongs to the cation transport ATPase (P-type) (TC 3.A.3) family. Type IIIA subfamily.</text>
</comment>
<comment type="caution">
    <text evidence="3">This protein is not an active H(+)-ATPase in its current form as there is a deletion in a conserved domain crucial for P-type ATPase function.</text>
</comment>
<organism>
    <name type="scientific">Arabidopsis thaliana</name>
    <name type="common">Mouse-ear cress</name>
    <dbReference type="NCBI Taxonomy" id="3702"/>
    <lineage>
        <taxon>Eukaryota</taxon>
        <taxon>Viridiplantae</taxon>
        <taxon>Streptophyta</taxon>
        <taxon>Embryophyta</taxon>
        <taxon>Tracheophyta</taxon>
        <taxon>Spermatophyta</taxon>
        <taxon>Magnoliopsida</taxon>
        <taxon>eudicotyledons</taxon>
        <taxon>Gunneridae</taxon>
        <taxon>Pentapetalae</taxon>
        <taxon>rosids</taxon>
        <taxon>malvids</taxon>
        <taxon>Brassicales</taxon>
        <taxon>Brassicaceae</taxon>
        <taxon>Camelineae</taxon>
        <taxon>Arabidopsis</taxon>
    </lineage>
</organism>